<proteinExistence type="inferred from homology"/>
<comment type="function">
    <text evidence="1">One of the primary rRNA binding proteins, it binds directly near the 3'-end of the 23S rRNA, where it nucleates assembly of the 50S subunit.</text>
</comment>
<comment type="subunit">
    <text evidence="1">Part of the 50S ribosomal subunit. Forms a cluster with proteins L14 and L24e.</text>
</comment>
<comment type="similarity">
    <text evidence="1">Belongs to the universal ribosomal protein uL3 family.</text>
</comment>
<organism>
    <name type="scientific">Saccharolobus islandicus (strain M.14.25 / Kamchatka #1)</name>
    <name type="common">Sulfolobus islandicus</name>
    <dbReference type="NCBI Taxonomy" id="427317"/>
    <lineage>
        <taxon>Archaea</taxon>
        <taxon>Thermoproteota</taxon>
        <taxon>Thermoprotei</taxon>
        <taxon>Sulfolobales</taxon>
        <taxon>Sulfolobaceae</taxon>
        <taxon>Saccharolobus</taxon>
    </lineage>
</organism>
<accession>C3MVH8</accession>
<reference key="1">
    <citation type="journal article" date="2009" name="Proc. Natl. Acad. Sci. U.S.A.">
        <title>Biogeography of the Sulfolobus islandicus pan-genome.</title>
        <authorList>
            <person name="Reno M.L."/>
            <person name="Held N.L."/>
            <person name="Fields C.J."/>
            <person name="Burke P.V."/>
            <person name="Whitaker R.J."/>
        </authorList>
    </citation>
    <scope>NUCLEOTIDE SEQUENCE [LARGE SCALE GENOMIC DNA]</scope>
    <source>
        <strain>M.14.25 / Kamchatka #1</strain>
    </source>
</reference>
<evidence type="ECO:0000255" key="1">
    <source>
        <dbReference type="HAMAP-Rule" id="MF_01325"/>
    </source>
</evidence>
<evidence type="ECO:0000256" key="2">
    <source>
        <dbReference type="SAM" id="MobiDB-lite"/>
    </source>
</evidence>
<evidence type="ECO:0000305" key="3"/>
<feature type="chain" id="PRO_1000214524" description="Large ribosomal subunit protein uL3">
    <location>
        <begin position="1"/>
        <end position="351"/>
    </location>
</feature>
<feature type="region of interest" description="Disordered" evidence="2">
    <location>
        <begin position="1"/>
        <end position="31"/>
    </location>
</feature>
<feature type="region of interest" description="Disordered" evidence="2">
    <location>
        <begin position="246"/>
        <end position="271"/>
    </location>
</feature>
<sequence length="351" mass="39457">MGHRKLASPRRGSAGLRPRKRSSELLPTPRTWPQINSPNPKLLGFVGYKVGMSHVFMIDDWPNSPTNGKEIYMPVTVLEVPPIIPLALRAYAVDGKGEPNVITEYWSPSSLQFLDITRRIHSFSSFLKNDESKKKFEEKFGSKLDLIKSNLDRIVYFRLLVATQPRKIPSLGKKVPDLVEIQIGGGEKKAQLDYALNVLGKEISIKDVFKEGQLIDVVGVTKGKGFAGVIKRYSVVELPRWHKHRKGSRKIGTRGPSLGTPSYTPQPGQLGFHRRTEYNKRIIKIGDDPKEINPAGGFVRYGIVRNTYILLEGSILGSKKRPIFLREAVRPSYVFENAPKITYVNLLSKQG</sequence>
<dbReference type="EMBL" id="CP001400">
    <property type="protein sequence ID" value="ACP38173.1"/>
    <property type="molecule type" value="Genomic_DNA"/>
</dbReference>
<dbReference type="RefSeq" id="WP_012711418.1">
    <property type="nucleotide sequence ID" value="NC_012588.1"/>
</dbReference>
<dbReference type="SMR" id="C3MVH8"/>
<dbReference type="KEGG" id="sia:M1425_1420"/>
<dbReference type="HOGENOM" id="CLU_033361_2_0_2"/>
<dbReference type="Proteomes" id="UP000001350">
    <property type="component" value="Chromosome"/>
</dbReference>
<dbReference type="GO" id="GO:0022625">
    <property type="term" value="C:cytosolic large ribosomal subunit"/>
    <property type="evidence" value="ECO:0007669"/>
    <property type="project" value="TreeGrafter"/>
</dbReference>
<dbReference type="GO" id="GO:0019843">
    <property type="term" value="F:rRNA binding"/>
    <property type="evidence" value="ECO:0007669"/>
    <property type="project" value="UniProtKB-UniRule"/>
</dbReference>
<dbReference type="GO" id="GO:0003735">
    <property type="term" value="F:structural constituent of ribosome"/>
    <property type="evidence" value="ECO:0007669"/>
    <property type="project" value="InterPro"/>
</dbReference>
<dbReference type="GO" id="GO:0006412">
    <property type="term" value="P:translation"/>
    <property type="evidence" value="ECO:0007669"/>
    <property type="project" value="UniProtKB-UniRule"/>
</dbReference>
<dbReference type="Gene3D" id="3.30.1430.10">
    <property type="match status" value="1"/>
</dbReference>
<dbReference type="Gene3D" id="4.10.960.10">
    <property type="entry name" value="Ribosomal protein L3, domain 3"/>
    <property type="match status" value="1"/>
</dbReference>
<dbReference type="Gene3D" id="2.40.30.10">
    <property type="entry name" value="Translation factors"/>
    <property type="match status" value="1"/>
</dbReference>
<dbReference type="HAMAP" id="MF_01325_A">
    <property type="entry name" value="Ribosomal_uL3_A"/>
    <property type="match status" value="1"/>
</dbReference>
<dbReference type="InterPro" id="IPR045077">
    <property type="entry name" value="L3_arc_euk"/>
</dbReference>
<dbReference type="InterPro" id="IPR044892">
    <property type="entry name" value="Ribosomal_L3_dom_3_arc_sf"/>
</dbReference>
<dbReference type="InterPro" id="IPR000597">
    <property type="entry name" value="Ribosomal_uL3"/>
</dbReference>
<dbReference type="InterPro" id="IPR019928">
    <property type="entry name" value="Ribosomal_uL3_arc"/>
</dbReference>
<dbReference type="InterPro" id="IPR019926">
    <property type="entry name" value="Ribosomal_uL3_CS"/>
</dbReference>
<dbReference type="InterPro" id="IPR009000">
    <property type="entry name" value="Transl_B-barrel_sf"/>
</dbReference>
<dbReference type="NCBIfam" id="TIGR03626">
    <property type="entry name" value="L3_arch"/>
    <property type="match status" value="1"/>
</dbReference>
<dbReference type="NCBIfam" id="NF003261">
    <property type="entry name" value="PRK04231.1"/>
    <property type="match status" value="1"/>
</dbReference>
<dbReference type="PANTHER" id="PTHR11363">
    <property type="entry name" value="60S RIBOSOMAL PROTEIN L3-RELATED"/>
    <property type="match status" value="1"/>
</dbReference>
<dbReference type="PANTHER" id="PTHR11363:SF5">
    <property type="entry name" value="LARGE RIBOSOMAL SUBUNIT PROTEIN UL3"/>
    <property type="match status" value="1"/>
</dbReference>
<dbReference type="Pfam" id="PF00297">
    <property type="entry name" value="Ribosomal_L3"/>
    <property type="match status" value="1"/>
</dbReference>
<dbReference type="SUPFAM" id="SSF50447">
    <property type="entry name" value="Translation proteins"/>
    <property type="match status" value="1"/>
</dbReference>
<dbReference type="PROSITE" id="PS00474">
    <property type="entry name" value="RIBOSOMAL_L3"/>
    <property type="match status" value="1"/>
</dbReference>
<keyword id="KW-0687">Ribonucleoprotein</keyword>
<keyword id="KW-0689">Ribosomal protein</keyword>
<keyword id="KW-0694">RNA-binding</keyword>
<keyword id="KW-0699">rRNA-binding</keyword>
<name>RL3_SACI4</name>
<protein>
    <recommendedName>
        <fullName evidence="1">Large ribosomal subunit protein uL3</fullName>
    </recommendedName>
    <alternativeName>
        <fullName evidence="3">50S ribosomal protein L3</fullName>
    </alternativeName>
</protein>
<gene>
    <name evidence="1" type="primary">rpl3</name>
    <name type="ordered locus">M1425_1420</name>
</gene>